<organism>
    <name type="scientific">Bacillus cereus (strain ZK / E33L)</name>
    <dbReference type="NCBI Taxonomy" id="288681"/>
    <lineage>
        <taxon>Bacteria</taxon>
        <taxon>Bacillati</taxon>
        <taxon>Bacillota</taxon>
        <taxon>Bacilli</taxon>
        <taxon>Bacillales</taxon>
        <taxon>Bacillaceae</taxon>
        <taxon>Bacillus</taxon>
        <taxon>Bacillus cereus group</taxon>
    </lineage>
</organism>
<name>TRUA2_BACCZ</name>
<sequence length="245" mass="27998">MNNYKLTIQYDGARFKGWQRLGNNDNTIQGKIESVISEMIGKEIEIIGCSRTDAGVHALNQVANFQSDEKLVEHKVKKYLNQYLPNDISITNVEEVHDRFHARYNSKAKTYLYKIWNEEHTNPFMRKYSMHVNKKLNVKSMKEAAKHLVGSHDFTAFSNAKSKKKSMVREVYSLEVMEEAGFVQIRVSGNGFLHNMVRKIVGALIEVGLGQLDAEAIPQILEAKQRNQINCLAEASGLYLENVEF</sequence>
<gene>
    <name evidence="1" type="primary">truA2</name>
    <name type="ordered locus">BCE33L0401</name>
</gene>
<proteinExistence type="inferred from homology"/>
<reference key="1">
    <citation type="journal article" date="2006" name="J. Bacteriol.">
        <title>Pathogenomic sequence analysis of Bacillus cereus and Bacillus thuringiensis isolates closely related to Bacillus anthracis.</title>
        <authorList>
            <person name="Han C.S."/>
            <person name="Xie G."/>
            <person name="Challacombe J.F."/>
            <person name="Altherr M.R."/>
            <person name="Bhotika S.S."/>
            <person name="Bruce D."/>
            <person name="Campbell C.S."/>
            <person name="Campbell M.L."/>
            <person name="Chen J."/>
            <person name="Chertkov O."/>
            <person name="Cleland C."/>
            <person name="Dimitrijevic M."/>
            <person name="Doggett N.A."/>
            <person name="Fawcett J.J."/>
            <person name="Glavina T."/>
            <person name="Goodwin L.A."/>
            <person name="Hill K.K."/>
            <person name="Hitchcock P."/>
            <person name="Jackson P.J."/>
            <person name="Keim P."/>
            <person name="Kewalramani A.R."/>
            <person name="Longmire J."/>
            <person name="Lucas S."/>
            <person name="Malfatti S."/>
            <person name="McMurry K."/>
            <person name="Meincke L.J."/>
            <person name="Misra M."/>
            <person name="Moseman B.L."/>
            <person name="Mundt M."/>
            <person name="Munk A.C."/>
            <person name="Okinaka R.T."/>
            <person name="Parson-Quintana B."/>
            <person name="Reilly L.P."/>
            <person name="Richardson P."/>
            <person name="Robinson D.L."/>
            <person name="Rubin E."/>
            <person name="Saunders E."/>
            <person name="Tapia R."/>
            <person name="Tesmer J.G."/>
            <person name="Thayer N."/>
            <person name="Thompson L.S."/>
            <person name="Tice H."/>
            <person name="Ticknor L.O."/>
            <person name="Wills P.L."/>
            <person name="Brettin T.S."/>
            <person name="Gilna P."/>
        </authorList>
    </citation>
    <scope>NUCLEOTIDE SEQUENCE [LARGE SCALE GENOMIC DNA]</scope>
    <source>
        <strain>ZK / E33L</strain>
    </source>
</reference>
<protein>
    <recommendedName>
        <fullName evidence="1">tRNA pseudouridine synthase A 2</fullName>
        <ecNumber evidence="1">5.4.99.12</ecNumber>
    </recommendedName>
    <alternativeName>
        <fullName evidence="1">tRNA pseudouridine(38-40) synthase</fullName>
    </alternativeName>
    <alternativeName>
        <fullName evidence="1">tRNA pseudouridylate synthase I 2</fullName>
    </alternativeName>
    <alternativeName>
        <fullName evidence="1">tRNA-uridine isomerase I 2</fullName>
    </alternativeName>
</protein>
<keyword id="KW-0413">Isomerase</keyword>
<keyword id="KW-0819">tRNA processing</keyword>
<accession>Q63GF1</accession>
<feature type="chain" id="PRO_0000057326" description="tRNA pseudouridine synthase A 2">
    <location>
        <begin position="1"/>
        <end position="245"/>
    </location>
</feature>
<feature type="active site" description="Nucleophile" evidence="1">
    <location>
        <position position="53"/>
    </location>
</feature>
<feature type="binding site" evidence="1">
    <location>
        <position position="111"/>
    </location>
    <ligand>
        <name>substrate</name>
    </ligand>
</feature>
<dbReference type="EC" id="5.4.99.12" evidence="1"/>
<dbReference type="EMBL" id="CP000001">
    <property type="protein sequence ID" value="AAU19838.1"/>
    <property type="molecule type" value="Genomic_DNA"/>
</dbReference>
<dbReference type="RefSeq" id="WP_001067302.1">
    <property type="nucleotide sequence ID" value="NC_006274.1"/>
</dbReference>
<dbReference type="SMR" id="Q63GF1"/>
<dbReference type="KEGG" id="bcz:BCE33L0401"/>
<dbReference type="PATRIC" id="fig|288681.22.peg.5202"/>
<dbReference type="Proteomes" id="UP000002612">
    <property type="component" value="Chromosome"/>
</dbReference>
<dbReference type="GO" id="GO:0003723">
    <property type="term" value="F:RNA binding"/>
    <property type="evidence" value="ECO:0007669"/>
    <property type="project" value="InterPro"/>
</dbReference>
<dbReference type="GO" id="GO:0160147">
    <property type="term" value="F:tRNA pseudouridine(38-40) synthase activity"/>
    <property type="evidence" value="ECO:0007669"/>
    <property type="project" value="UniProtKB-EC"/>
</dbReference>
<dbReference type="GO" id="GO:0031119">
    <property type="term" value="P:tRNA pseudouridine synthesis"/>
    <property type="evidence" value="ECO:0007669"/>
    <property type="project" value="UniProtKB-UniRule"/>
</dbReference>
<dbReference type="CDD" id="cd02570">
    <property type="entry name" value="PseudoU_synth_EcTruA"/>
    <property type="match status" value="1"/>
</dbReference>
<dbReference type="FunFam" id="3.30.70.580:FF:000001">
    <property type="entry name" value="tRNA pseudouridine synthase A"/>
    <property type="match status" value="1"/>
</dbReference>
<dbReference type="Gene3D" id="3.30.70.660">
    <property type="entry name" value="Pseudouridine synthase I, catalytic domain, C-terminal subdomain"/>
    <property type="match status" value="1"/>
</dbReference>
<dbReference type="Gene3D" id="3.30.70.580">
    <property type="entry name" value="Pseudouridine synthase I, catalytic domain, N-terminal subdomain"/>
    <property type="match status" value="1"/>
</dbReference>
<dbReference type="HAMAP" id="MF_00171">
    <property type="entry name" value="TruA"/>
    <property type="match status" value="1"/>
</dbReference>
<dbReference type="InterPro" id="IPR020103">
    <property type="entry name" value="PsdUridine_synth_cat_dom_sf"/>
</dbReference>
<dbReference type="InterPro" id="IPR001406">
    <property type="entry name" value="PsdUridine_synth_TruA"/>
</dbReference>
<dbReference type="InterPro" id="IPR020097">
    <property type="entry name" value="PsdUridine_synth_TruA_a/b_dom"/>
</dbReference>
<dbReference type="InterPro" id="IPR020095">
    <property type="entry name" value="PsdUridine_synth_TruA_C"/>
</dbReference>
<dbReference type="InterPro" id="IPR020094">
    <property type="entry name" value="TruA/RsuA/RluB/E/F_N"/>
</dbReference>
<dbReference type="NCBIfam" id="TIGR00071">
    <property type="entry name" value="hisT_truA"/>
    <property type="match status" value="1"/>
</dbReference>
<dbReference type="PANTHER" id="PTHR11142">
    <property type="entry name" value="PSEUDOURIDYLATE SYNTHASE"/>
    <property type="match status" value="1"/>
</dbReference>
<dbReference type="PANTHER" id="PTHR11142:SF22">
    <property type="entry name" value="TRNA PSEUDOURIDINE SYNTHASE A 2"/>
    <property type="match status" value="1"/>
</dbReference>
<dbReference type="Pfam" id="PF01416">
    <property type="entry name" value="PseudoU_synth_1"/>
    <property type="match status" value="2"/>
</dbReference>
<dbReference type="PIRSF" id="PIRSF001430">
    <property type="entry name" value="tRNA_psdUrid_synth"/>
    <property type="match status" value="1"/>
</dbReference>
<dbReference type="SUPFAM" id="SSF55120">
    <property type="entry name" value="Pseudouridine synthase"/>
    <property type="match status" value="1"/>
</dbReference>
<evidence type="ECO:0000255" key="1">
    <source>
        <dbReference type="HAMAP-Rule" id="MF_00171"/>
    </source>
</evidence>
<comment type="function">
    <text evidence="1">Formation of pseudouridine at positions 38, 39 and 40 in the anticodon stem and loop of transfer RNAs.</text>
</comment>
<comment type="catalytic activity">
    <reaction evidence="1">
        <text>uridine(38/39/40) in tRNA = pseudouridine(38/39/40) in tRNA</text>
        <dbReference type="Rhea" id="RHEA:22376"/>
        <dbReference type="Rhea" id="RHEA-COMP:10085"/>
        <dbReference type="Rhea" id="RHEA-COMP:10087"/>
        <dbReference type="ChEBI" id="CHEBI:65314"/>
        <dbReference type="ChEBI" id="CHEBI:65315"/>
        <dbReference type="EC" id="5.4.99.12"/>
    </reaction>
</comment>
<comment type="subunit">
    <text evidence="1">Homodimer.</text>
</comment>
<comment type="similarity">
    <text evidence="1">Belongs to the tRNA pseudouridine synthase TruA family.</text>
</comment>